<evidence type="ECO:0000255" key="1">
    <source>
        <dbReference type="HAMAP-Rule" id="MF_00248"/>
    </source>
</evidence>
<keyword id="KW-0021">Allosteric enzyme</keyword>
<keyword id="KW-0963">Cytoplasm</keyword>
<keyword id="KW-0378">Hydrolase</keyword>
<keyword id="KW-0479">Metal-binding</keyword>
<keyword id="KW-0645">Protease</keyword>
<keyword id="KW-0915">Sodium</keyword>
<keyword id="KW-0346">Stress response</keyword>
<keyword id="KW-0888">Threonine protease</keyword>
<sequence>MTTIITVRKGGKVVMAGDGQVSLGQTVMKGNARKVRRIGKGEVVAGFAGATADAFTLLERLEKKLEQYPGQLMRAAVELAKDWRTDKYLRNLEAMMLVADKSTTLAITGNGDVLEPEHGTTAIGSGGNFAFAAARALMDTDKSAEEIARRALDIAADICVYTNHNIVVESLDVEG</sequence>
<accession>B3PWI6</accession>
<dbReference type="EC" id="3.4.25.2" evidence="1"/>
<dbReference type="EMBL" id="CP001074">
    <property type="protein sequence ID" value="ACE89054.1"/>
    <property type="molecule type" value="Genomic_DNA"/>
</dbReference>
<dbReference type="SMR" id="B3PWI6"/>
<dbReference type="MEROPS" id="T01.006"/>
<dbReference type="KEGG" id="rec:RHECIAT_CH0000051"/>
<dbReference type="eggNOG" id="COG5405">
    <property type="taxonomic scope" value="Bacteria"/>
</dbReference>
<dbReference type="HOGENOM" id="CLU_093872_1_0_5"/>
<dbReference type="Proteomes" id="UP000008817">
    <property type="component" value="Chromosome"/>
</dbReference>
<dbReference type="GO" id="GO:0009376">
    <property type="term" value="C:HslUV protease complex"/>
    <property type="evidence" value="ECO:0007669"/>
    <property type="project" value="UniProtKB-UniRule"/>
</dbReference>
<dbReference type="GO" id="GO:0005839">
    <property type="term" value="C:proteasome core complex"/>
    <property type="evidence" value="ECO:0007669"/>
    <property type="project" value="InterPro"/>
</dbReference>
<dbReference type="GO" id="GO:0046872">
    <property type="term" value="F:metal ion binding"/>
    <property type="evidence" value="ECO:0007669"/>
    <property type="project" value="UniProtKB-KW"/>
</dbReference>
<dbReference type="GO" id="GO:0004298">
    <property type="term" value="F:threonine-type endopeptidase activity"/>
    <property type="evidence" value="ECO:0007669"/>
    <property type="project" value="UniProtKB-KW"/>
</dbReference>
<dbReference type="GO" id="GO:0051603">
    <property type="term" value="P:proteolysis involved in protein catabolic process"/>
    <property type="evidence" value="ECO:0007669"/>
    <property type="project" value="InterPro"/>
</dbReference>
<dbReference type="CDD" id="cd01913">
    <property type="entry name" value="protease_HslV"/>
    <property type="match status" value="1"/>
</dbReference>
<dbReference type="FunFam" id="3.60.20.10:FF:000002">
    <property type="entry name" value="ATP-dependent protease subunit HslV"/>
    <property type="match status" value="1"/>
</dbReference>
<dbReference type="Gene3D" id="3.60.20.10">
    <property type="entry name" value="Glutamine Phosphoribosylpyrophosphate, subunit 1, domain 1"/>
    <property type="match status" value="1"/>
</dbReference>
<dbReference type="HAMAP" id="MF_00248">
    <property type="entry name" value="HslV"/>
    <property type="match status" value="1"/>
</dbReference>
<dbReference type="InterPro" id="IPR022281">
    <property type="entry name" value="ATP-dep_Prtase_HsIV_su"/>
</dbReference>
<dbReference type="InterPro" id="IPR029055">
    <property type="entry name" value="Ntn_hydrolases_N"/>
</dbReference>
<dbReference type="InterPro" id="IPR001353">
    <property type="entry name" value="Proteasome_sua/b"/>
</dbReference>
<dbReference type="InterPro" id="IPR023333">
    <property type="entry name" value="Proteasome_suB-type"/>
</dbReference>
<dbReference type="NCBIfam" id="TIGR03692">
    <property type="entry name" value="ATP_dep_HslV"/>
    <property type="match status" value="1"/>
</dbReference>
<dbReference type="NCBIfam" id="NF003964">
    <property type="entry name" value="PRK05456.1"/>
    <property type="match status" value="1"/>
</dbReference>
<dbReference type="PANTHER" id="PTHR32194:SF7">
    <property type="entry name" value="ATP-DEPENDENT PROTEASE SUBUNIT HSLV"/>
    <property type="match status" value="1"/>
</dbReference>
<dbReference type="PANTHER" id="PTHR32194">
    <property type="entry name" value="METALLOPROTEASE TLDD"/>
    <property type="match status" value="1"/>
</dbReference>
<dbReference type="Pfam" id="PF00227">
    <property type="entry name" value="Proteasome"/>
    <property type="match status" value="1"/>
</dbReference>
<dbReference type="PIRSF" id="PIRSF039093">
    <property type="entry name" value="HslV"/>
    <property type="match status" value="1"/>
</dbReference>
<dbReference type="SUPFAM" id="SSF56235">
    <property type="entry name" value="N-terminal nucleophile aminohydrolases (Ntn hydrolases)"/>
    <property type="match status" value="1"/>
</dbReference>
<dbReference type="PROSITE" id="PS51476">
    <property type="entry name" value="PROTEASOME_BETA_2"/>
    <property type="match status" value="1"/>
</dbReference>
<reference key="1">
    <citation type="journal article" date="2010" name="Appl. Environ. Microbiol.">
        <title>Conserved symbiotic plasmid DNA sequences in the multireplicon pangenomic structure of Rhizobium etli.</title>
        <authorList>
            <person name="Gonzalez V."/>
            <person name="Acosta J.L."/>
            <person name="Santamaria R.I."/>
            <person name="Bustos P."/>
            <person name="Fernandez J.L."/>
            <person name="Hernandez Gonzalez I.L."/>
            <person name="Diaz R."/>
            <person name="Flores M."/>
            <person name="Palacios R."/>
            <person name="Mora J."/>
            <person name="Davila G."/>
        </authorList>
    </citation>
    <scope>NUCLEOTIDE SEQUENCE [LARGE SCALE GENOMIC DNA]</scope>
    <source>
        <strain>CIAT 652</strain>
    </source>
</reference>
<organism>
    <name type="scientific">Rhizobium etli (strain CIAT 652)</name>
    <dbReference type="NCBI Taxonomy" id="491916"/>
    <lineage>
        <taxon>Bacteria</taxon>
        <taxon>Pseudomonadati</taxon>
        <taxon>Pseudomonadota</taxon>
        <taxon>Alphaproteobacteria</taxon>
        <taxon>Hyphomicrobiales</taxon>
        <taxon>Rhizobiaceae</taxon>
        <taxon>Rhizobium/Agrobacterium group</taxon>
        <taxon>Rhizobium</taxon>
    </lineage>
</organism>
<feature type="chain" id="PRO_1000100906" description="ATP-dependent protease subunit HslV">
    <location>
        <begin position="1"/>
        <end position="175"/>
    </location>
</feature>
<feature type="active site" evidence="1">
    <location>
        <position position="2"/>
    </location>
</feature>
<feature type="binding site" evidence="1">
    <location>
        <position position="156"/>
    </location>
    <ligand>
        <name>Na(+)</name>
        <dbReference type="ChEBI" id="CHEBI:29101"/>
    </ligand>
</feature>
<feature type="binding site" evidence="1">
    <location>
        <position position="159"/>
    </location>
    <ligand>
        <name>Na(+)</name>
        <dbReference type="ChEBI" id="CHEBI:29101"/>
    </ligand>
</feature>
<feature type="binding site" evidence="1">
    <location>
        <position position="162"/>
    </location>
    <ligand>
        <name>Na(+)</name>
        <dbReference type="ChEBI" id="CHEBI:29101"/>
    </ligand>
</feature>
<protein>
    <recommendedName>
        <fullName evidence="1">ATP-dependent protease subunit HslV</fullName>
        <ecNumber evidence="1">3.4.25.2</ecNumber>
    </recommendedName>
</protein>
<gene>
    <name evidence="1" type="primary">hslV</name>
    <name type="ordered locus">RHECIAT_CH0000051</name>
</gene>
<comment type="function">
    <text evidence="1">Protease subunit of a proteasome-like degradation complex believed to be a general protein degrading machinery.</text>
</comment>
<comment type="catalytic activity">
    <reaction evidence="1">
        <text>ATP-dependent cleavage of peptide bonds with broad specificity.</text>
        <dbReference type="EC" id="3.4.25.2"/>
    </reaction>
</comment>
<comment type="activity regulation">
    <text evidence="1">Allosterically activated by HslU binding.</text>
</comment>
<comment type="subunit">
    <text evidence="1">A double ring-shaped homohexamer of HslV is capped on each side by a ring-shaped HslU homohexamer. The assembly of the HslU/HslV complex is dependent on binding of ATP.</text>
</comment>
<comment type="subcellular location">
    <subcellularLocation>
        <location evidence="1">Cytoplasm</location>
    </subcellularLocation>
</comment>
<comment type="similarity">
    <text evidence="1">Belongs to the peptidase T1B family. HslV subfamily.</text>
</comment>
<name>HSLV_RHIE6</name>
<proteinExistence type="inferred from homology"/>